<evidence type="ECO:0000250" key="1">
    <source>
        <dbReference type="UniProtKB" id="Q8N987"/>
    </source>
</evidence>
<evidence type="ECO:0000250" key="2">
    <source>
        <dbReference type="UniProtKB" id="Q9ESB5"/>
    </source>
</evidence>
<evidence type="ECO:0000255" key="3"/>
<evidence type="ECO:0000255" key="4">
    <source>
        <dbReference type="PROSITE-ProRule" id="PRU00448"/>
    </source>
</evidence>
<evidence type="ECO:0000256" key="5">
    <source>
        <dbReference type="SAM" id="MobiDB-lite"/>
    </source>
</evidence>
<evidence type="ECO:0000269" key="6">
    <source>
    </source>
</evidence>
<evidence type="ECO:0000305" key="7"/>
<evidence type="ECO:0007744" key="8">
    <source>
    </source>
</evidence>
<accession>Q8BG18</accession>
<accession>Q80W91</accession>
<gene>
    <name type="primary">Necab1</name>
    <name type="synonym">Efcbp1</name>
</gene>
<sequence length="352" mass="40934">MEDSRETSPSSNNSSEELSSTLQLSKGMSIFLDILRRADKNDDGKLSFEEFKAYFADGVLSGEELHELFHTIDTHNTNNLDTEELCEYFSQHLGEYENVLAALEDLNLSILKAMGKTKKDYQEASNLEQFVTRFLLKETLNQLQSLQNSLECAMETTEEQTRQERQGPSKPEVLSIQWPGKRSSRRVQRHNSFSPNSPQFNVSSPALLEEDNQWMTQINRLQKLIDRLEKKDLKLEPLEEEIIEENTKPHIMLVQRQMSVTEEDLEEFQLALKHYVESASAQSGCLRISIQKLSNESRYMIYEFWENSSVWNRHLQTNYSKTFQRSNVDFLETPELTSTMLVPASWWILNNN</sequence>
<name>NECA1_MOUSE</name>
<protein>
    <recommendedName>
        <fullName>N-terminal EF-hand calcium-binding protein 1</fullName>
        <shortName>EF-hand calcium-binding protein 1</shortName>
    </recommendedName>
</protein>
<reference key="1">
    <citation type="submission" date="2003-05" db="EMBL/GenBank/DDBJ databases">
        <title>Cloning and characterization of human and mouse NECAB1.</title>
        <authorList>
            <person name="Wu H."/>
            <person name="Yu L."/>
            <person name="Li D."/>
        </authorList>
    </citation>
    <scope>NUCLEOTIDE SEQUENCE [MRNA]</scope>
    <source>
        <strain>Kunming</strain>
    </source>
</reference>
<reference key="2">
    <citation type="journal article" date="2005" name="Science">
        <title>The transcriptional landscape of the mammalian genome.</title>
        <authorList>
            <person name="Carninci P."/>
            <person name="Kasukawa T."/>
            <person name="Katayama S."/>
            <person name="Gough J."/>
            <person name="Frith M.C."/>
            <person name="Maeda N."/>
            <person name="Oyama R."/>
            <person name="Ravasi T."/>
            <person name="Lenhard B."/>
            <person name="Wells C."/>
            <person name="Kodzius R."/>
            <person name="Shimokawa K."/>
            <person name="Bajic V.B."/>
            <person name="Brenner S.E."/>
            <person name="Batalov S."/>
            <person name="Forrest A.R."/>
            <person name="Zavolan M."/>
            <person name="Davis M.J."/>
            <person name="Wilming L.G."/>
            <person name="Aidinis V."/>
            <person name="Allen J.E."/>
            <person name="Ambesi-Impiombato A."/>
            <person name="Apweiler R."/>
            <person name="Aturaliya R.N."/>
            <person name="Bailey T.L."/>
            <person name="Bansal M."/>
            <person name="Baxter L."/>
            <person name="Beisel K.W."/>
            <person name="Bersano T."/>
            <person name="Bono H."/>
            <person name="Chalk A.M."/>
            <person name="Chiu K.P."/>
            <person name="Choudhary V."/>
            <person name="Christoffels A."/>
            <person name="Clutterbuck D.R."/>
            <person name="Crowe M.L."/>
            <person name="Dalla E."/>
            <person name="Dalrymple B.P."/>
            <person name="de Bono B."/>
            <person name="Della Gatta G."/>
            <person name="di Bernardo D."/>
            <person name="Down T."/>
            <person name="Engstrom P."/>
            <person name="Fagiolini M."/>
            <person name="Faulkner G."/>
            <person name="Fletcher C.F."/>
            <person name="Fukushima T."/>
            <person name="Furuno M."/>
            <person name="Futaki S."/>
            <person name="Gariboldi M."/>
            <person name="Georgii-Hemming P."/>
            <person name="Gingeras T.R."/>
            <person name="Gojobori T."/>
            <person name="Green R.E."/>
            <person name="Gustincich S."/>
            <person name="Harbers M."/>
            <person name="Hayashi Y."/>
            <person name="Hensch T.K."/>
            <person name="Hirokawa N."/>
            <person name="Hill D."/>
            <person name="Huminiecki L."/>
            <person name="Iacono M."/>
            <person name="Ikeo K."/>
            <person name="Iwama A."/>
            <person name="Ishikawa T."/>
            <person name="Jakt M."/>
            <person name="Kanapin A."/>
            <person name="Katoh M."/>
            <person name="Kawasawa Y."/>
            <person name="Kelso J."/>
            <person name="Kitamura H."/>
            <person name="Kitano H."/>
            <person name="Kollias G."/>
            <person name="Krishnan S.P."/>
            <person name="Kruger A."/>
            <person name="Kummerfeld S.K."/>
            <person name="Kurochkin I.V."/>
            <person name="Lareau L.F."/>
            <person name="Lazarevic D."/>
            <person name="Lipovich L."/>
            <person name="Liu J."/>
            <person name="Liuni S."/>
            <person name="McWilliam S."/>
            <person name="Madan Babu M."/>
            <person name="Madera M."/>
            <person name="Marchionni L."/>
            <person name="Matsuda H."/>
            <person name="Matsuzawa S."/>
            <person name="Miki H."/>
            <person name="Mignone F."/>
            <person name="Miyake S."/>
            <person name="Morris K."/>
            <person name="Mottagui-Tabar S."/>
            <person name="Mulder N."/>
            <person name="Nakano N."/>
            <person name="Nakauchi H."/>
            <person name="Ng P."/>
            <person name="Nilsson R."/>
            <person name="Nishiguchi S."/>
            <person name="Nishikawa S."/>
            <person name="Nori F."/>
            <person name="Ohara O."/>
            <person name="Okazaki Y."/>
            <person name="Orlando V."/>
            <person name="Pang K.C."/>
            <person name="Pavan W.J."/>
            <person name="Pavesi G."/>
            <person name="Pesole G."/>
            <person name="Petrovsky N."/>
            <person name="Piazza S."/>
            <person name="Reed J."/>
            <person name="Reid J.F."/>
            <person name="Ring B.Z."/>
            <person name="Ringwald M."/>
            <person name="Rost B."/>
            <person name="Ruan Y."/>
            <person name="Salzberg S.L."/>
            <person name="Sandelin A."/>
            <person name="Schneider C."/>
            <person name="Schoenbach C."/>
            <person name="Sekiguchi K."/>
            <person name="Semple C.A."/>
            <person name="Seno S."/>
            <person name="Sessa L."/>
            <person name="Sheng Y."/>
            <person name="Shibata Y."/>
            <person name="Shimada H."/>
            <person name="Shimada K."/>
            <person name="Silva D."/>
            <person name="Sinclair B."/>
            <person name="Sperling S."/>
            <person name="Stupka E."/>
            <person name="Sugiura K."/>
            <person name="Sultana R."/>
            <person name="Takenaka Y."/>
            <person name="Taki K."/>
            <person name="Tammoja K."/>
            <person name="Tan S.L."/>
            <person name="Tang S."/>
            <person name="Taylor M.S."/>
            <person name="Tegner J."/>
            <person name="Teichmann S.A."/>
            <person name="Ueda H.R."/>
            <person name="van Nimwegen E."/>
            <person name="Verardo R."/>
            <person name="Wei C.L."/>
            <person name="Yagi K."/>
            <person name="Yamanishi H."/>
            <person name="Zabarovsky E."/>
            <person name="Zhu S."/>
            <person name="Zimmer A."/>
            <person name="Hide W."/>
            <person name="Bult C."/>
            <person name="Grimmond S.M."/>
            <person name="Teasdale R.D."/>
            <person name="Liu E.T."/>
            <person name="Brusic V."/>
            <person name="Quackenbush J."/>
            <person name="Wahlestedt C."/>
            <person name="Mattick J.S."/>
            <person name="Hume D.A."/>
            <person name="Kai C."/>
            <person name="Sasaki D."/>
            <person name="Tomaru Y."/>
            <person name="Fukuda S."/>
            <person name="Kanamori-Katayama M."/>
            <person name="Suzuki M."/>
            <person name="Aoki J."/>
            <person name="Arakawa T."/>
            <person name="Iida J."/>
            <person name="Imamura K."/>
            <person name="Itoh M."/>
            <person name="Kato T."/>
            <person name="Kawaji H."/>
            <person name="Kawagashira N."/>
            <person name="Kawashima T."/>
            <person name="Kojima M."/>
            <person name="Kondo S."/>
            <person name="Konno H."/>
            <person name="Nakano K."/>
            <person name="Ninomiya N."/>
            <person name="Nishio T."/>
            <person name="Okada M."/>
            <person name="Plessy C."/>
            <person name="Shibata K."/>
            <person name="Shiraki T."/>
            <person name="Suzuki S."/>
            <person name="Tagami M."/>
            <person name="Waki K."/>
            <person name="Watahiki A."/>
            <person name="Okamura-Oho Y."/>
            <person name="Suzuki H."/>
            <person name="Kawai J."/>
            <person name="Hayashizaki Y."/>
        </authorList>
    </citation>
    <scope>NUCLEOTIDE SEQUENCE [LARGE SCALE MRNA]</scope>
    <source>
        <strain>C57BL/6J</strain>
        <tissue>Head</tissue>
        <tissue>Liver</tissue>
        <tissue>Spinal cord</tissue>
    </source>
</reference>
<reference key="3">
    <citation type="journal article" date="2009" name="PLoS Biol.">
        <title>Lineage-specific biology revealed by a finished genome assembly of the mouse.</title>
        <authorList>
            <person name="Church D.M."/>
            <person name="Goodstadt L."/>
            <person name="Hillier L.W."/>
            <person name="Zody M.C."/>
            <person name="Goldstein S."/>
            <person name="She X."/>
            <person name="Bult C.J."/>
            <person name="Agarwala R."/>
            <person name="Cherry J.L."/>
            <person name="DiCuccio M."/>
            <person name="Hlavina W."/>
            <person name="Kapustin Y."/>
            <person name="Meric P."/>
            <person name="Maglott D."/>
            <person name="Birtle Z."/>
            <person name="Marques A.C."/>
            <person name="Graves T."/>
            <person name="Zhou S."/>
            <person name="Teague B."/>
            <person name="Potamousis K."/>
            <person name="Churas C."/>
            <person name="Place M."/>
            <person name="Herschleb J."/>
            <person name="Runnheim R."/>
            <person name="Forrest D."/>
            <person name="Amos-Landgraf J."/>
            <person name="Schwartz D.C."/>
            <person name="Cheng Z."/>
            <person name="Lindblad-Toh K."/>
            <person name="Eichler E.E."/>
            <person name="Ponting C.P."/>
        </authorList>
    </citation>
    <scope>NUCLEOTIDE SEQUENCE [LARGE SCALE GENOMIC DNA]</scope>
    <source>
        <strain>C57BL/6J</strain>
    </source>
</reference>
<reference key="4">
    <citation type="journal article" date="2004" name="Genome Res.">
        <title>The status, quality, and expansion of the NIH full-length cDNA project: the Mammalian Gene Collection (MGC).</title>
        <authorList>
            <consortium name="The MGC Project Team"/>
        </authorList>
    </citation>
    <scope>NUCLEOTIDE SEQUENCE [LARGE SCALE MRNA]</scope>
    <source>
        <strain>C57BL/6J</strain>
        <tissue>Brain</tissue>
    </source>
</reference>
<reference key="5">
    <citation type="journal article" date="2002" name="Neuroscience">
        <title>NECABs: a family of neuronal Ca(2+)-binding proteins with an unusual domain structure and a restricted expression pattern.</title>
        <authorList>
            <person name="Sugita S."/>
            <person name="Ho A."/>
            <person name="Suedhof T.C."/>
        </authorList>
    </citation>
    <scope>SUBCELLULAR LOCATION</scope>
    <scope>TISSUE SPECIFICITY</scope>
    <source>
        <tissue>Brain</tissue>
    </source>
</reference>
<reference key="6">
    <citation type="journal article" date="2010" name="Cell">
        <title>A tissue-specific atlas of mouse protein phosphorylation and expression.</title>
        <authorList>
            <person name="Huttlin E.L."/>
            <person name="Jedrychowski M.P."/>
            <person name="Elias J.E."/>
            <person name="Goswami T."/>
            <person name="Rad R."/>
            <person name="Beausoleil S.A."/>
            <person name="Villen J."/>
            <person name="Haas W."/>
            <person name="Sowa M.E."/>
            <person name="Gygi S.P."/>
        </authorList>
    </citation>
    <scope>PHOSPHORYLATION [LARGE SCALE ANALYSIS] AT SER-192 AND SER-197</scope>
    <scope>IDENTIFICATION BY MASS SPECTROMETRY [LARGE SCALE ANALYSIS]</scope>
    <source>
        <tissue>Brain</tissue>
    </source>
</reference>
<organism>
    <name type="scientific">Mus musculus</name>
    <name type="common">Mouse</name>
    <dbReference type="NCBI Taxonomy" id="10090"/>
    <lineage>
        <taxon>Eukaryota</taxon>
        <taxon>Metazoa</taxon>
        <taxon>Chordata</taxon>
        <taxon>Craniata</taxon>
        <taxon>Vertebrata</taxon>
        <taxon>Euteleostomi</taxon>
        <taxon>Mammalia</taxon>
        <taxon>Eutheria</taxon>
        <taxon>Euarchontoglires</taxon>
        <taxon>Glires</taxon>
        <taxon>Rodentia</taxon>
        <taxon>Myomorpha</taxon>
        <taxon>Muroidea</taxon>
        <taxon>Muridae</taxon>
        <taxon>Murinae</taxon>
        <taxon>Mus</taxon>
        <taxon>Mus</taxon>
    </lineage>
</organism>
<proteinExistence type="evidence at protein level"/>
<dbReference type="EMBL" id="AY278200">
    <property type="protein sequence ID" value="AAP32077.1"/>
    <property type="molecule type" value="mRNA"/>
</dbReference>
<dbReference type="EMBL" id="AK039240">
    <property type="protein sequence ID" value="BAC30290.1"/>
    <property type="molecule type" value="mRNA"/>
</dbReference>
<dbReference type="EMBL" id="AK050307">
    <property type="protein sequence ID" value="BAC34179.1"/>
    <property type="molecule type" value="mRNA"/>
</dbReference>
<dbReference type="EMBL" id="AK081951">
    <property type="protein sequence ID" value="BAC38379.1"/>
    <property type="molecule type" value="mRNA"/>
</dbReference>
<dbReference type="EMBL" id="AL732571">
    <property type="status" value="NOT_ANNOTATED_CDS"/>
    <property type="molecule type" value="Genomic_DNA"/>
</dbReference>
<dbReference type="EMBL" id="AL831792">
    <property type="status" value="NOT_ANNOTATED_CDS"/>
    <property type="molecule type" value="Genomic_DNA"/>
</dbReference>
<dbReference type="EMBL" id="AL929383">
    <property type="status" value="NOT_ANNOTATED_CDS"/>
    <property type="molecule type" value="Genomic_DNA"/>
</dbReference>
<dbReference type="EMBL" id="BC067055">
    <property type="protein sequence ID" value="AAH67055.1"/>
    <property type="molecule type" value="mRNA"/>
</dbReference>
<dbReference type="CCDS" id="CCDS17982.1"/>
<dbReference type="RefSeq" id="NP_848732.3">
    <property type="nucleotide sequence ID" value="NM_178617.4"/>
</dbReference>
<dbReference type="BioGRID" id="213379">
    <property type="interactions" value="1"/>
</dbReference>
<dbReference type="FunCoup" id="Q8BG18">
    <property type="interactions" value="1708"/>
</dbReference>
<dbReference type="STRING" id="10090.ENSMUSP00000038165"/>
<dbReference type="GlyGen" id="Q8BG18">
    <property type="glycosylation" value="1 site, 1 N-linked glycan (1 site)"/>
</dbReference>
<dbReference type="iPTMnet" id="Q8BG18"/>
<dbReference type="MetOSite" id="Q8BG18"/>
<dbReference type="PhosphoSitePlus" id="Q8BG18"/>
<dbReference type="PaxDb" id="10090-ENSMUSP00000038165"/>
<dbReference type="ProteomicsDB" id="252800"/>
<dbReference type="Antibodypedia" id="6629">
    <property type="antibodies" value="226 antibodies from 23 providers"/>
</dbReference>
<dbReference type="DNASU" id="69352"/>
<dbReference type="Ensembl" id="ENSMUST00000041606.14">
    <property type="protein sequence ID" value="ENSMUSP00000038165.8"/>
    <property type="gene ID" value="ENSMUSG00000040536.16"/>
</dbReference>
<dbReference type="Ensembl" id="ENSMUST00000108273.2">
    <property type="protein sequence ID" value="ENSMUSP00000103908.2"/>
    <property type="gene ID" value="ENSMUSG00000040536.16"/>
</dbReference>
<dbReference type="GeneID" id="69352"/>
<dbReference type="KEGG" id="mmu:69352"/>
<dbReference type="UCSC" id="uc008sbi.2">
    <property type="organism name" value="mouse"/>
</dbReference>
<dbReference type="AGR" id="MGI:1916602"/>
<dbReference type="CTD" id="64168"/>
<dbReference type="MGI" id="MGI:1916602">
    <property type="gene designation" value="Necab1"/>
</dbReference>
<dbReference type="VEuPathDB" id="HostDB:ENSMUSG00000040536"/>
<dbReference type="eggNOG" id="ENOG502QWRY">
    <property type="taxonomic scope" value="Eukaryota"/>
</dbReference>
<dbReference type="GeneTree" id="ENSGT00950000183131"/>
<dbReference type="HOGENOM" id="CLU_041553_0_0_1"/>
<dbReference type="InParanoid" id="Q8BG18"/>
<dbReference type="OMA" id="EDSQWMI"/>
<dbReference type="OrthoDB" id="289247at2759"/>
<dbReference type="PhylomeDB" id="Q8BG18"/>
<dbReference type="TreeFam" id="TF331029"/>
<dbReference type="BioGRID-ORCS" id="69352">
    <property type="hits" value="2 hits in 76 CRISPR screens"/>
</dbReference>
<dbReference type="ChiTaRS" id="Necab1">
    <property type="organism name" value="mouse"/>
</dbReference>
<dbReference type="PRO" id="PR:Q8BG18"/>
<dbReference type="Proteomes" id="UP000000589">
    <property type="component" value="Chromosome 4"/>
</dbReference>
<dbReference type="RNAct" id="Q8BG18">
    <property type="molecule type" value="protein"/>
</dbReference>
<dbReference type="Bgee" id="ENSMUSG00000040536">
    <property type="expression patterns" value="Expressed in medial dorsal nucleus of thalamus and 73 other cell types or tissues"/>
</dbReference>
<dbReference type="GO" id="GO:0005929">
    <property type="term" value="C:cilium"/>
    <property type="evidence" value="ECO:0007669"/>
    <property type="project" value="Ensembl"/>
</dbReference>
<dbReference type="GO" id="GO:0005829">
    <property type="term" value="C:cytosol"/>
    <property type="evidence" value="ECO:0007669"/>
    <property type="project" value="Ensembl"/>
</dbReference>
<dbReference type="GO" id="GO:0005654">
    <property type="term" value="C:nucleoplasm"/>
    <property type="evidence" value="ECO:0007669"/>
    <property type="project" value="Ensembl"/>
</dbReference>
<dbReference type="GO" id="GO:0005509">
    <property type="term" value="F:calcium ion binding"/>
    <property type="evidence" value="ECO:0007669"/>
    <property type="project" value="InterPro"/>
</dbReference>
<dbReference type="GO" id="GO:0042802">
    <property type="term" value="F:identical protein binding"/>
    <property type="evidence" value="ECO:0007669"/>
    <property type="project" value="Ensembl"/>
</dbReference>
<dbReference type="GO" id="GO:0001835">
    <property type="term" value="P:blastocyst hatching"/>
    <property type="evidence" value="ECO:0000315"/>
    <property type="project" value="MGI"/>
</dbReference>
<dbReference type="FunFam" id="3.30.70.100:FF:000025">
    <property type="entry name" value="N-terminal EF-hand calcium-binding protein 1"/>
    <property type="match status" value="1"/>
</dbReference>
<dbReference type="FunFam" id="1.10.238.10:FF:000642">
    <property type="entry name" value="Uncharacterized protein"/>
    <property type="match status" value="1"/>
</dbReference>
<dbReference type="Gene3D" id="3.30.70.100">
    <property type="match status" value="1"/>
</dbReference>
<dbReference type="Gene3D" id="1.10.238.10">
    <property type="entry name" value="EF-hand"/>
    <property type="match status" value="1"/>
</dbReference>
<dbReference type="InterPro" id="IPR007138">
    <property type="entry name" value="ABM_dom"/>
</dbReference>
<dbReference type="InterPro" id="IPR011008">
    <property type="entry name" value="Dimeric_a/b-barrel"/>
</dbReference>
<dbReference type="InterPro" id="IPR011992">
    <property type="entry name" value="EF-hand-dom_pair"/>
</dbReference>
<dbReference type="InterPro" id="IPR018247">
    <property type="entry name" value="EF_Hand_1_Ca_BS"/>
</dbReference>
<dbReference type="InterPro" id="IPR002048">
    <property type="entry name" value="EF_hand_dom"/>
</dbReference>
<dbReference type="InterPro" id="IPR039862">
    <property type="entry name" value="NECAB1/2/3"/>
</dbReference>
<dbReference type="PANTHER" id="PTHR12178">
    <property type="entry name" value="EF-HAND DOMAIN-CONTAINING PROTEIN"/>
    <property type="match status" value="1"/>
</dbReference>
<dbReference type="PANTHER" id="PTHR12178:SF11">
    <property type="entry name" value="N-TERMINAL EF-HAND CALCIUM-BINDING PROTEIN 1"/>
    <property type="match status" value="1"/>
</dbReference>
<dbReference type="Pfam" id="PF03992">
    <property type="entry name" value="ABM"/>
    <property type="match status" value="1"/>
</dbReference>
<dbReference type="SMART" id="SM00054">
    <property type="entry name" value="EFh"/>
    <property type="match status" value="2"/>
</dbReference>
<dbReference type="SUPFAM" id="SSF54909">
    <property type="entry name" value="Dimeric alpha+beta barrel"/>
    <property type="match status" value="1"/>
</dbReference>
<dbReference type="SUPFAM" id="SSF47473">
    <property type="entry name" value="EF-hand"/>
    <property type="match status" value="1"/>
</dbReference>
<dbReference type="PROSITE" id="PS51725">
    <property type="entry name" value="ABM"/>
    <property type="match status" value="1"/>
</dbReference>
<dbReference type="PROSITE" id="PS00018">
    <property type="entry name" value="EF_HAND_1"/>
    <property type="match status" value="1"/>
</dbReference>
<dbReference type="PROSITE" id="PS50222">
    <property type="entry name" value="EF_HAND_2"/>
    <property type="match status" value="2"/>
</dbReference>
<keyword id="KW-0106">Calcium</keyword>
<keyword id="KW-0175">Coiled coil</keyword>
<keyword id="KW-0963">Cytoplasm</keyword>
<keyword id="KW-0479">Metal-binding</keyword>
<keyword id="KW-0597">Phosphoprotein</keyword>
<keyword id="KW-1185">Reference proteome</keyword>
<keyword id="KW-0677">Repeat</keyword>
<feature type="chain" id="PRO_0000282610" description="N-terminal EF-hand calcium-binding protein 1">
    <location>
        <begin position="1"/>
        <end position="352"/>
    </location>
</feature>
<feature type="domain" description="EF-hand 1" evidence="4">
    <location>
        <begin position="26"/>
        <end position="61"/>
    </location>
</feature>
<feature type="domain" description="EF-hand 2" evidence="4">
    <location>
        <begin position="60"/>
        <end position="95"/>
    </location>
</feature>
<feature type="domain" description="ABM">
    <location>
        <begin position="252"/>
        <end position="340"/>
    </location>
</feature>
<feature type="region of interest" description="Disordered" evidence="5">
    <location>
        <begin position="155"/>
        <end position="202"/>
    </location>
</feature>
<feature type="coiled-coil region" evidence="3">
    <location>
        <begin position="135"/>
        <end position="163"/>
    </location>
</feature>
<feature type="coiled-coil region" evidence="3">
    <location>
        <begin position="209"/>
        <end position="275"/>
    </location>
</feature>
<feature type="compositionally biased region" description="Polar residues" evidence="5">
    <location>
        <begin position="190"/>
        <end position="202"/>
    </location>
</feature>
<feature type="binding site" evidence="4">
    <location>
        <position position="39"/>
    </location>
    <ligand>
        <name>Ca(2+)</name>
        <dbReference type="ChEBI" id="CHEBI:29108"/>
    </ligand>
</feature>
<feature type="binding site" evidence="4">
    <location>
        <position position="41"/>
    </location>
    <ligand>
        <name>Ca(2+)</name>
        <dbReference type="ChEBI" id="CHEBI:29108"/>
    </ligand>
</feature>
<feature type="binding site" evidence="4">
    <location>
        <position position="43"/>
    </location>
    <ligand>
        <name>Ca(2+)</name>
        <dbReference type="ChEBI" id="CHEBI:29108"/>
    </ligand>
</feature>
<feature type="binding site" evidence="4">
    <location>
        <position position="45"/>
    </location>
    <ligand>
        <name>Ca(2+)</name>
        <dbReference type="ChEBI" id="CHEBI:29108"/>
    </ligand>
</feature>
<feature type="binding site" evidence="4">
    <location>
        <position position="50"/>
    </location>
    <ligand>
        <name>Ca(2+)</name>
        <dbReference type="ChEBI" id="CHEBI:29108"/>
    </ligand>
</feature>
<feature type="modified residue" description="Phosphoserine" evidence="2">
    <location>
        <position position="4"/>
    </location>
</feature>
<feature type="modified residue" description="Phosphoserine" evidence="8">
    <location>
        <position position="192"/>
    </location>
</feature>
<feature type="modified residue" description="Phosphoserine" evidence="8">
    <location>
        <position position="197"/>
    </location>
</feature>
<feature type="sequence conflict" description="In Ref. 1; AAP32077." evidence="7" ref="1">
    <original>E</original>
    <variation>G</variation>
    <location>
        <position position="244"/>
    </location>
</feature>
<comment type="subunit">
    <text evidence="1">Interacts with STX1. May interact with CPNE6.</text>
</comment>
<comment type="subcellular location">
    <subcellularLocation>
        <location evidence="6">Cytoplasm</location>
    </subcellularLocation>
</comment>
<comment type="tissue specificity">
    <text evidence="6">Expressed in brain (at protein level). Expressed in the cerebral cortex only in layer 4, thalamic nuclei (the mediodorsal nucleus), hippocampus (a small band of pyramidal neurons at the boundary between CA1 and CA3), interneurons interspersed throughout the hippocampus proper, interneurons in the hilus, bodies of the neurons but also their dendritic projections (at protein level).</text>
</comment>